<organism>
    <name type="scientific">Saccharolobus solfataricus (strain ATCC 35092 / DSM 1617 / JCM 11322 / P2)</name>
    <name type="common">Sulfolobus solfataricus</name>
    <dbReference type="NCBI Taxonomy" id="273057"/>
    <lineage>
        <taxon>Archaea</taxon>
        <taxon>Thermoproteota</taxon>
        <taxon>Thermoprotei</taxon>
        <taxon>Sulfolobales</taxon>
        <taxon>Sulfolobaceae</taxon>
        <taxon>Saccharolobus</taxon>
    </lineage>
</organism>
<protein>
    <recommendedName>
        <fullName evidence="1">Tryptophan--tRNA ligase</fullName>
        <ecNumber evidence="1">6.1.1.2</ecNumber>
    </recommendedName>
    <alternativeName>
        <fullName evidence="1">Tryptophanyl-tRNA synthetase</fullName>
        <shortName evidence="1">TrpRS</shortName>
    </alternativeName>
</protein>
<accession>Q97ZX0</accession>
<keyword id="KW-0030">Aminoacyl-tRNA synthetase</keyword>
<keyword id="KW-0067">ATP-binding</keyword>
<keyword id="KW-0963">Cytoplasm</keyword>
<keyword id="KW-0436">Ligase</keyword>
<keyword id="KW-0547">Nucleotide-binding</keyword>
<keyword id="KW-0648">Protein biosynthesis</keyword>
<keyword id="KW-1185">Reference proteome</keyword>
<feature type="chain" id="PRO_0000136733" description="Tryptophan--tRNA ligase">
    <location>
        <begin position="1"/>
        <end position="380"/>
    </location>
</feature>
<feature type="short sequence motif" description="'HIGH' region">
    <location>
        <begin position="81"/>
        <end position="89"/>
    </location>
</feature>
<feature type="short sequence motif" description="'KMSKS' region">
    <location>
        <begin position="253"/>
        <end position="257"/>
    </location>
</feature>
<dbReference type="EC" id="6.1.1.2" evidence="1"/>
<dbReference type="EMBL" id="AE006641">
    <property type="protein sequence ID" value="AAK40778.1"/>
    <property type="status" value="ALT_INIT"/>
    <property type="molecule type" value="Genomic_DNA"/>
</dbReference>
<dbReference type="PIR" id="C90190">
    <property type="entry name" value="C90190"/>
</dbReference>
<dbReference type="RefSeq" id="WP_009988707.1">
    <property type="nucleotide sequence ID" value="NC_002754.1"/>
</dbReference>
<dbReference type="SMR" id="Q97ZX0"/>
<dbReference type="FunCoup" id="Q97ZX0">
    <property type="interactions" value="344"/>
</dbReference>
<dbReference type="STRING" id="273057.SSO0452"/>
<dbReference type="PaxDb" id="273057-SSO0452"/>
<dbReference type="EnsemblBacteria" id="AAK40778">
    <property type="protein sequence ID" value="AAK40778"/>
    <property type="gene ID" value="SSO0452"/>
</dbReference>
<dbReference type="KEGG" id="sso:SSO0452"/>
<dbReference type="PATRIC" id="fig|273057.12.peg.447"/>
<dbReference type="eggNOG" id="arCOG01887">
    <property type="taxonomic scope" value="Archaea"/>
</dbReference>
<dbReference type="HOGENOM" id="CLU_032621_0_1_2"/>
<dbReference type="InParanoid" id="Q97ZX0"/>
<dbReference type="PhylomeDB" id="Q97ZX0"/>
<dbReference type="Proteomes" id="UP000001974">
    <property type="component" value="Chromosome"/>
</dbReference>
<dbReference type="GO" id="GO:0005737">
    <property type="term" value="C:cytoplasm"/>
    <property type="evidence" value="ECO:0000318"/>
    <property type="project" value="GO_Central"/>
</dbReference>
<dbReference type="GO" id="GO:0005524">
    <property type="term" value="F:ATP binding"/>
    <property type="evidence" value="ECO:0007669"/>
    <property type="project" value="UniProtKB-UniRule"/>
</dbReference>
<dbReference type="GO" id="GO:0004830">
    <property type="term" value="F:tryptophan-tRNA ligase activity"/>
    <property type="evidence" value="ECO:0000318"/>
    <property type="project" value="GO_Central"/>
</dbReference>
<dbReference type="GO" id="GO:0006436">
    <property type="term" value="P:tryptophanyl-tRNA aminoacylation"/>
    <property type="evidence" value="ECO:0000318"/>
    <property type="project" value="GO_Central"/>
</dbReference>
<dbReference type="CDD" id="cd00806">
    <property type="entry name" value="TrpRS_core"/>
    <property type="match status" value="1"/>
</dbReference>
<dbReference type="FunFam" id="1.10.240.10:FF:000007">
    <property type="entry name" value="Tryptophan--tRNA ligase"/>
    <property type="match status" value="1"/>
</dbReference>
<dbReference type="FunFam" id="3.40.50.620:FF:000138">
    <property type="entry name" value="Tryptophan--tRNA ligase"/>
    <property type="match status" value="1"/>
</dbReference>
<dbReference type="Gene3D" id="3.40.50.620">
    <property type="entry name" value="HUPs"/>
    <property type="match status" value="1"/>
</dbReference>
<dbReference type="Gene3D" id="1.10.240.10">
    <property type="entry name" value="Tyrosyl-Transfer RNA Synthetase"/>
    <property type="match status" value="1"/>
</dbReference>
<dbReference type="HAMAP" id="MF_00140_A">
    <property type="entry name" value="Trp_tRNA_synth_A"/>
    <property type="match status" value="1"/>
</dbReference>
<dbReference type="InterPro" id="IPR002305">
    <property type="entry name" value="aa-tRNA-synth_Ic"/>
</dbReference>
<dbReference type="InterPro" id="IPR014729">
    <property type="entry name" value="Rossmann-like_a/b/a_fold"/>
</dbReference>
<dbReference type="InterPro" id="IPR002306">
    <property type="entry name" value="Trp-tRNA-ligase"/>
</dbReference>
<dbReference type="InterPro" id="IPR020653">
    <property type="entry name" value="Tryptophan-tRNA-ligase_arc"/>
</dbReference>
<dbReference type="NCBIfam" id="NF008924">
    <property type="entry name" value="PRK12285.1-1"/>
    <property type="match status" value="1"/>
</dbReference>
<dbReference type="NCBIfam" id="NF008927">
    <property type="entry name" value="PRK12285.1-4"/>
    <property type="match status" value="1"/>
</dbReference>
<dbReference type="NCBIfam" id="TIGR00233">
    <property type="entry name" value="trpS"/>
    <property type="match status" value="1"/>
</dbReference>
<dbReference type="PANTHER" id="PTHR10055:SF1">
    <property type="entry name" value="TRYPTOPHAN--TRNA LIGASE, CYTOPLASMIC"/>
    <property type="match status" value="1"/>
</dbReference>
<dbReference type="PANTHER" id="PTHR10055">
    <property type="entry name" value="TRYPTOPHANYL-TRNA SYNTHETASE"/>
    <property type="match status" value="1"/>
</dbReference>
<dbReference type="Pfam" id="PF00579">
    <property type="entry name" value="tRNA-synt_1b"/>
    <property type="match status" value="1"/>
</dbReference>
<dbReference type="PRINTS" id="PR01039">
    <property type="entry name" value="TRNASYNTHTRP"/>
</dbReference>
<dbReference type="SUPFAM" id="SSF52374">
    <property type="entry name" value="Nucleotidylyl transferase"/>
    <property type="match status" value="1"/>
</dbReference>
<sequence>MPDEFTVTPWEVKGKVDYDKLIVQFGTQKITEELKQRIKNLAGDLHVMLRRNVFFSHRDLDLVLNDYEKSKGFFLYTGRAPSLGMHIGHLIPFIFTKWLQEKFNANLYIEITDDEKYMRNPEFTLDQTRSWAYDNILDIIAVGFNPDKTFIFQDTEYIRNMYPITVKIAKKLTFSEVRATFGLDASSNIGLIFYPALQIAPTMFEKKRCLIPAGIDQDPYWRLQRDIAESLGYYKAAQIHSKFLPPLTGPEGKMSSSNPETAIYLVDDPKTVERKIMKYAFSGGQPTIELHRKYGGNPEIDVPFQWLYYFFEEDDNRIKEIEEEYRSGKMLTGELKQILIDKLNNFLEEHRRRREEAKELVHVFKYDGKLAKQMWEKIHE</sequence>
<reference key="1">
    <citation type="journal article" date="2001" name="Proc. Natl. Acad. Sci. U.S.A.">
        <title>The complete genome of the crenarchaeon Sulfolobus solfataricus P2.</title>
        <authorList>
            <person name="She Q."/>
            <person name="Singh R.K."/>
            <person name="Confalonieri F."/>
            <person name="Zivanovic Y."/>
            <person name="Allard G."/>
            <person name="Awayez M.J."/>
            <person name="Chan-Weiher C.C.-Y."/>
            <person name="Clausen I.G."/>
            <person name="Curtis B.A."/>
            <person name="De Moors A."/>
            <person name="Erauso G."/>
            <person name="Fletcher C."/>
            <person name="Gordon P.M.K."/>
            <person name="Heikamp-de Jong I."/>
            <person name="Jeffries A.C."/>
            <person name="Kozera C.J."/>
            <person name="Medina N."/>
            <person name="Peng X."/>
            <person name="Thi-Ngoc H.P."/>
            <person name="Redder P."/>
            <person name="Schenk M.E."/>
            <person name="Theriault C."/>
            <person name="Tolstrup N."/>
            <person name="Charlebois R.L."/>
            <person name="Doolittle W.F."/>
            <person name="Duguet M."/>
            <person name="Gaasterland T."/>
            <person name="Garrett R.A."/>
            <person name="Ragan M.A."/>
            <person name="Sensen C.W."/>
            <person name="Van der Oost J."/>
        </authorList>
    </citation>
    <scope>NUCLEOTIDE SEQUENCE [LARGE SCALE GENOMIC DNA]</scope>
    <source>
        <strain>ATCC 35092 / DSM 1617 / JCM 11322 / P2</strain>
    </source>
</reference>
<name>SYW_SACS2</name>
<proteinExistence type="inferred from homology"/>
<evidence type="ECO:0000255" key="1">
    <source>
        <dbReference type="HAMAP-Rule" id="MF_00140"/>
    </source>
</evidence>
<evidence type="ECO:0000305" key="2"/>
<comment type="catalytic activity">
    <reaction evidence="1">
        <text>tRNA(Trp) + L-tryptophan + ATP = L-tryptophyl-tRNA(Trp) + AMP + diphosphate + H(+)</text>
        <dbReference type="Rhea" id="RHEA:24080"/>
        <dbReference type="Rhea" id="RHEA-COMP:9671"/>
        <dbReference type="Rhea" id="RHEA-COMP:9705"/>
        <dbReference type="ChEBI" id="CHEBI:15378"/>
        <dbReference type="ChEBI" id="CHEBI:30616"/>
        <dbReference type="ChEBI" id="CHEBI:33019"/>
        <dbReference type="ChEBI" id="CHEBI:57912"/>
        <dbReference type="ChEBI" id="CHEBI:78442"/>
        <dbReference type="ChEBI" id="CHEBI:78535"/>
        <dbReference type="ChEBI" id="CHEBI:456215"/>
        <dbReference type="EC" id="6.1.1.2"/>
    </reaction>
</comment>
<comment type="subcellular location">
    <subcellularLocation>
        <location evidence="1">Cytoplasm</location>
    </subcellularLocation>
</comment>
<comment type="similarity">
    <text evidence="1">Belongs to the class-I aminoacyl-tRNA synthetase family.</text>
</comment>
<comment type="sequence caution" evidence="2">
    <conflict type="erroneous initiation">
        <sequence resource="EMBL-CDS" id="AAK40778"/>
    </conflict>
</comment>
<gene>
    <name evidence="1" type="primary">trpS</name>
    <name type="ordered locus">SSO0452</name>
</gene>